<organism>
    <name type="scientific">Homo sapiens</name>
    <name type="common">Human</name>
    <dbReference type="NCBI Taxonomy" id="9606"/>
    <lineage>
        <taxon>Eukaryota</taxon>
        <taxon>Metazoa</taxon>
        <taxon>Chordata</taxon>
        <taxon>Craniata</taxon>
        <taxon>Vertebrata</taxon>
        <taxon>Euteleostomi</taxon>
        <taxon>Mammalia</taxon>
        <taxon>Eutheria</taxon>
        <taxon>Euarchontoglires</taxon>
        <taxon>Primates</taxon>
        <taxon>Haplorrhini</taxon>
        <taxon>Catarrhini</taxon>
        <taxon>Hominidae</taxon>
        <taxon>Homo</taxon>
    </lineage>
</organism>
<keyword id="KW-0002">3D-structure</keyword>
<keyword id="KW-0007">Acetylation</keyword>
<keyword id="KW-0025">Alternative splicing</keyword>
<keyword id="KW-0090">Biological rhythms</keyword>
<keyword id="KW-0963">Cytoplasm</keyword>
<keyword id="KW-0903">Direct protein sequencing</keyword>
<keyword id="KW-0238">DNA-binding</keyword>
<keyword id="KW-1017">Isopeptide bond</keyword>
<keyword id="KW-0488">Methylation</keyword>
<keyword id="KW-0539">Nucleus</keyword>
<keyword id="KW-0597">Phosphoprotein</keyword>
<keyword id="KW-1267">Proteomics identification</keyword>
<keyword id="KW-1185">Reference proteome</keyword>
<keyword id="KW-0677">Repeat</keyword>
<keyword id="KW-0687">Ribonucleoprotein</keyword>
<keyword id="KW-0694">RNA-binding</keyword>
<keyword id="KW-0804">Transcription</keyword>
<keyword id="KW-0805">Transcription regulation</keyword>
<keyword id="KW-0832">Ubl conjugation</keyword>
<feature type="initiator methionine" description="Removed" evidence="22">
    <location>
        <position position="1"/>
    </location>
</feature>
<feature type="chain" id="PRO_0000081849" description="Heterogeneous nuclear ribonucleoprotein D0">
    <location>
        <begin position="2"/>
        <end position="355"/>
    </location>
</feature>
<feature type="domain" description="RRM 1" evidence="3">
    <location>
        <begin position="97"/>
        <end position="179"/>
    </location>
</feature>
<feature type="domain" description="RRM 2" evidence="3">
    <location>
        <begin position="182"/>
        <end position="261"/>
    </location>
</feature>
<feature type="region of interest" description="Disordered" evidence="4">
    <location>
        <begin position="1"/>
        <end position="92"/>
    </location>
</feature>
<feature type="compositionally biased region" description="Low complexity" evidence="4">
    <location>
        <begin position="11"/>
        <end position="20"/>
    </location>
</feature>
<feature type="compositionally biased region" description="Low complexity" evidence="4">
    <location>
        <begin position="27"/>
        <end position="42"/>
    </location>
</feature>
<feature type="compositionally biased region" description="Gly residues" evidence="4">
    <location>
        <begin position="43"/>
        <end position="58"/>
    </location>
</feature>
<feature type="compositionally biased region" description="Basic and acidic residues" evidence="4">
    <location>
        <begin position="64"/>
        <end position="73"/>
    </location>
</feature>
<feature type="modified residue" description="N-acetylserine" evidence="22">
    <location>
        <position position="2"/>
    </location>
</feature>
<feature type="modified residue" description="Phosphoserine" evidence="25">
    <location>
        <position position="71"/>
    </location>
</feature>
<feature type="modified residue" description="Phosphoserine" evidence="25 26 27">
    <location>
        <position position="80"/>
    </location>
</feature>
<feature type="modified residue" description="Phosphoserine" evidence="20 24">
    <location>
        <position position="82"/>
    </location>
</feature>
<feature type="modified residue" description="Phosphoserine" evidence="20 25 26 27">
    <location>
        <position position="83"/>
    </location>
</feature>
<feature type="modified residue" description="Phosphothreonine" evidence="27">
    <location>
        <position position="91"/>
    </location>
</feature>
<feature type="modified residue" description="N6-methyllysine" evidence="11">
    <location>
        <position position="119"/>
    </location>
</feature>
<feature type="modified residue" description="Phosphothreonine" evidence="27 29">
    <location>
        <position position="127"/>
    </location>
</feature>
<feature type="modified residue" description="N6-acetyllysine" evidence="23">
    <location>
        <position position="165"/>
    </location>
</feature>
<feature type="modified residue" description="Phosphoserine" evidence="19 20 24 25 26 27 29">
    <location>
        <position position="190"/>
    </location>
</feature>
<feature type="modified residue" description="Phosphothreonine" evidence="20 21 24 25 27">
    <location>
        <position position="193"/>
    </location>
</feature>
<feature type="modified residue" description="N6-acetyllysine" evidence="2">
    <location>
        <position position="243"/>
    </location>
</feature>
<feature type="modified residue" description="N6-acetyllysine" evidence="23">
    <location>
        <position position="251"/>
    </location>
</feature>
<feature type="modified residue" description="Phosphoserine" evidence="27">
    <location>
        <position position="271"/>
    </location>
</feature>
<feature type="modified residue" description="Omega-N-methylarginine" evidence="28">
    <location>
        <position position="272"/>
    </location>
</feature>
<feature type="modified residue" description="Omega-N-methylarginine" evidence="28">
    <location>
        <position position="278"/>
    </location>
</feature>
<feature type="modified residue" description="Omega-N-methylarginine" evidence="28">
    <location>
        <position position="280"/>
    </location>
</feature>
<feature type="modified residue" description="Omega-N-methylarginine" evidence="2">
    <location>
        <position position="282"/>
    </location>
</feature>
<feature type="modified residue" description="Asymmetric dimethylarginine; alternate" evidence="2">
    <location>
        <position position="345"/>
    </location>
</feature>
<feature type="modified residue" description="Dimethylated arginine; alternate" evidence="18">
    <location>
        <position position="345"/>
    </location>
</feature>
<feature type="modified residue" description="Omega-N-methylarginine; alternate" evidence="28">
    <location>
        <position position="345"/>
    </location>
</feature>
<feature type="cross-link" description="Glycyl lysine isopeptide (Lys-Gly) (interchain with G-Cter in SUMO2)" evidence="31">
    <location>
        <position position="72"/>
    </location>
</feature>
<feature type="cross-link" description="Glycyl lysine isopeptide (Lys-Gly) (interchain with G-Cter in SUMO2)" evidence="31">
    <location>
        <position position="129"/>
    </location>
</feature>
<feature type="cross-link" description="Glycyl lysine isopeptide (Lys-Gly) (interchain with G-Cter in SUMO2)" evidence="30 31">
    <location>
        <position position="197"/>
    </location>
</feature>
<feature type="splice variant" id="VSP_005834" description="In isoform 2 and isoform 4." evidence="14 16">
    <location>
        <begin position="79"/>
        <end position="97"/>
    </location>
</feature>
<feature type="splice variant" id="VSP_005835" description="In isoform 3 and isoform 4." evidence="12 13 15 16">
    <original>GPSQNWNQGYSNYWNQGYGNYGYNSQGYGGYGGYDYTGYNNYYGYGDYSN</original>
    <variation>D</variation>
    <location>
        <begin position="285"/>
        <end position="334"/>
    </location>
</feature>
<feature type="sequence conflict" description="In Ref. 11; AA sequence." evidence="17" ref="11">
    <original>S</original>
    <variation>R</variation>
    <location>
        <position position="150"/>
    </location>
</feature>
<feature type="sequence conflict" description="In Ref. 9; AAA35781." evidence="17" ref="9">
    <original>F</original>
    <variation>L</variation>
    <location>
        <position position="225"/>
    </location>
</feature>
<feature type="strand" evidence="36">
    <location>
        <begin position="97"/>
        <end position="102"/>
    </location>
</feature>
<feature type="helix" evidence="36">
    <location>
        <begin position="110"/>
        <end position="117"/>
    </location>
</feature>
<feature type="helix" evidence="36">
    <location>
        <begin position="118"/>
        <end position="120"/>
    </location>
</feature>
<feature type="strand" evidence="36">
    <location>
        <begin position="123"/>
        <end position="130"/>
    </location>
</feature>
<feature type="turn" evidence="36">
    <location>
        <begin position="132"/>
        <end position="134"/>
    </location>
</feature>
<feature type="strand" evidence="36">
    <location>
        <begin position="137"/>
        <end position="147"/>
    </location>
</feature>
<feature type="helix" evidence="36">
    <location>
        <begin position="149"/>
        <end position="155"/>
    </location>
</feature>
<feature type="strand" evidence="36">
    <location>
        <begin position="160"/>
        <end position="162"/>
    </location>
</feature>
<feature type="strand" evidence="36">
    <location>
        <begin position="165"/>
        <end position="171"/>
    </location>
</feature>
<feature type="helix" evidence="36">
    <location>
        <begin position="172"/>
        <end position="174"/>
    </location>
</feature>
<feature type="strand" evidence="32">
    <location>
        <begin position="184"/>
        <end position="187"/>
    </location>
</feature>
<feature type="helix" evidence="32">
    <location>
        <begin position="195"/>
        <end position="205"/>
    </location>
</feature>
<feature type="strand" evidence="32">
    <location>
        <begin position="209"/>
        <end position="211"/>
    </location>
</feature>
<feature type="turn" evidence="34">
    <location>
        <begin position="217"/>
        <end position="219"/>
    </location>
</feature>
<feature type="strand" evidence="32">
    <location>
        <begin position="220"/>
        <end position="222"/>
    </location>
</feature>
<feature type="strand" evidence="32">
    <location>
        <begin position="226"/>
        <end position="229"/>
    </location>
</feature>
<feature type="strand" evidence="32">
    <location>
        <begin position="231"/>
        <end position="233"/>
    </location>
</feature>
<feature type="helix" evidence="32">
    <location>
        <begin position="234"/>
        <end position="240"/>
    </location>
</feature>
<feature type="strand" evidence="33">
    <location>
        <begin position="244"/>
        <end position="247"/>
    </location>
</feature>
<feature type="strand" evidence="33">
    <location>
        <begin position="250"/>
        <end position="253"/>
    </location>
</feature>
<feature type="strand" evidence="32">
    <location>
        <begin position="254"/>
        <end position="256"/>
    </location>
</feature>
<feature type="strand" evidence="35">
    <location>
        <begin position="349"/>
        <end position="351"/>
    </location>
</feature>
<feature type="modified residue" description="Omega-N-methylarginine" evidence="28">
    <location sequence="Q14103-3">
        <position position="282"/>
    </location>
</feature>
<feature type="modified residue" description="N6-acetyllysine" evidence="23">
    <location sequence="Q14103-3">
        <position position="292"/>
    </location>
</feature>
<feature type="modified residue" description="Omega-N-methylarginine" evidence="28">
    <location sequence="Q14103-4">
        <position position="263"/>
    </location>
</feature>
<feature type="modified residue" description="N6-acetyllysine" evidence="23">
    <location sequence="Q14103-4">
        <position position="273"/>
    </location>
</feature>
<protein>
    <recommendedName>
        <fullName>Heterogeneous nuclear ribonucleoprotein D0</fullName>
        <shortName>hnRNP D0</shortName>
    </recommendedName>
    <alternativeName>
        <fullName>AU-rich element RNA-binding protein 1</fullName>
    </alternativeName>
</protein>
<name>HNRPD_HUMAN</name>
<sequence>MSEEQFGGDGAAAAATAAVGGSAGEQEGAMVAATQGAAAAAGSGAGTGGGTASGGTEGGSAESEGAKIDASKNEEDEGHSNSSPRHSEAATAQREEWKMFIGGLSWDTTKKDLKDYFSKFGEVVDCTLKLDPITGRSRGFGFVLFKESESVDKVMDQKEHKLNGKVIDPKRAKAMKTKEPVKKIFVGGLSPDTPEEKIREYFGGFGEVESIELPMDNKTNKRRGFCFITFKEEEPVKKIMEKKYHNVGLSKCEIKVAMSKEQYQQQQQWGSRGGFAGRARGRGGGPSQNWNQGYSNYWNQGYGNYGYNSQGYGGYGGYDYTGYNNYYGYGDYSNQQSGYGKVSRRGGHQNSYKPY</sequence>
<proteinExistence type="evidence at protein level"/>
<evidence type="ECO:0000250" key="1"/>
<evidence type="ECO:0000250" key="2">
    <source>
        <dbReference type="UniProtKB" id="Q60668"/>
    </source>
</evidence>
<evidence type="ECO:0000255" key="3">
    <source>
        <dbReference type="PROSITE-ProRule" id="PRU00176"/>
    </source>
</evidence>
<evidence type="ECO:0000256" key="4">
    <source>
        <dbReference type="SAM" id="MobiDB-lite"/>
    </source>
</evidence>
<evidence type="ECO:0000269" key="5">
    <source>
    </source>
</evidence>
<evidence type="ECO:0000269" key="6">
    <source>
    </source>
</evidence>
<evidence type="ECO:0000269" key="7">
    <source>
    </source>
</evidence>
<evidence type="ECO:0000269" key="8">
    <source>
    </source>
</evidence>
<evidence type="ECO:0000269" key="9">
    <source>
    </source>
</evidence>
<evidence type="ECO:0000269" key="10">
    <source>
    </source>
</evidence>
<evidence type="ECO:0000269" key="11">
    <source ref="10"/>
</evidence>
<evidence type="ECO:0000303" key="12">
    <source>
    </source>
</evidence>
<evidence type="ECO:0000303" key="13">
    <source>
    </source>
</evidence>
<evidence type="ECO:0000303" key="14">
    <source>
    </source>
</evidence>
<evidence type="ECO:0000303" key="15">
    <source>
    </source>
</evidence>
<evidence type="ECO:0000303" key="16">
    <source>
    </source>
</evidence>
<evidence type="ECO:0000305" key="17"/>
<evidence type="ECO:0007744" key="18">
    <source>
    </source>
</evidence>
<evidence type="ECO:0007744" key="19">
    <source>
    </source>
</evidence>
<evidence type="ECO:0007744" key="20">
    <source>
    </source>
</evidence>
<evidence type="ECO:0007744" key="21">
    <source>
    </source>
</evidence>
<evidence type="ECO:0007744" key="22">
    <source>
    </source>
</evidence>
<evidence type="ECO:0007744" key="23">
    <source>
    </source>
</evidence>
<evidence type="ECO:0007744" key="24">
    <source>
    </source>
</evidence>
<evidence type="ECO:0007744" key="25">
    <source>
    </source>
</evidence>
<evidence type="ECO:0007744" key="26">
    <source>
    </source>
</evidence>
<evidence type="ECO:0007744" key="27">
    <source>
    </source>
</evidence>
<evidence type="ECO:0007744" key="28">
    <source>
    </source>
</evidence>
<evidence type="ECO:0007744" key="29">
    <source>
    </source>
</evidence>
<evidence type="ECO:0007744" key="30">
    <source>
    </source>
</evidence>
<evidence type="ECO:0007744" key="31">
    <source>
    </source>
</evidence>
<evidence type="ECO:0007829" key="32">
    <source>
        <dbReference type="PDB" id="1IQT"/>
    </source>
</evidence>
<evidence type="ECO:0007829" key="33">
    <source>
        <dbReference type="PDB" id="1WTB"/>
    </source>
</evidence>
<evidence type="ECO:0007829" key="34">
    <source>
        <dbReference type="PDB" id="1X0F"/>
    </source>
</evidence>
<evidence type="ECO:0007829" key="35">
    <source>
        <dbReference type="PDB" id="2Z5N"/>
    </source>
</evidence>
<evidence type="ECO:0007829" key="36">
    <source>
        <dbReference type="PDB" id="5IM0"/>
    </source>
</evidence>
<gene>
    <name type="primary">HNRNPD</name>
    <name type="synonym">AUF1</name>
    <name type="synonym">HNRPD</name>
</gene>
<dbReference type="EMBL" id="D55671">
    <property type="protein sequence ID" value="BAA09522.1"/>
    <property type="molecule type" value="mRNA"/>
</dbReference>
<dbReference type="EMBL" id="D55672">
    <property type="protein sequence ID" value="BAA09523.1"/>
    <property type="molecule type" value="mRNA"/>
</dbReference>
<dbReference type="EMBL" id="D55673">
    <property type="protein sequence ID" value="BAA09524.1"/>
    <property type="molecule type" value="mRNA"/>
</dbReference>
<dbReference type="EMBL" id="D55674">
    <property type="protein sequence ID" value="BAA09525.1"/>
    <property type="molecule type" value="mRNA"/>
</dbReference>
<dbReference type="EMBL" id="AF026126">
    <property type="protein sequence ID" value="AAC23474.1"/>
    <property type="molecule type" value="Genomic_DNA"/>
</dbReference>
<dbReference type="EMBL" id="AF026126">
    <property type="protein sequence ID" value="AAC23475.1"/>
    <property type="molecule type" value="Genomic_DNA"/>
</dbReference>
<dbReference type="EMBL" id="AF026126">
    <property type="protein sequence ID" value="AAC23476.1"/>
    <property type="molecule type" value="Genomic_DNA"/>
</dbReference>
<dbReference type="EMBL" id="AK292707">
    <property type="protein sequence ID" value="BAF85396.1"/>
    <property type="molecule type" value="mRNA"/>
</dbReference>
<dbReference type="EMBL" id="AC124016">
    <property type="protein sequence ID" value="AAY40913.1"/>
    <property type="molecule type" value="Genomic_DNA"/>
</dbReference>
<dbReference type="EMBL" id="CH471057">
    <property type="protein sequence ID" value="EAX05874.1"/>
    <property type="molecule type" value="Genomic_DNA"/>
</dbReference>
<dbReference type="EMBL" id="BC002401">
    <property type="protein sequence ID" value="AAH02401.1"/>
    <property type="molecule type" value="mRNA"/>
</dbReference>
<dbReference type="EMBL" id="BC023977">
    <property type="protein sequence ID" value="AAH23977.1"/>
    <property type="molecule type" value="mRNA"/>
</dbReference>
<dbReference type="EMBL" id="BC026015">
    <property type="protein sequence ID" value="AAH26015.1"/>
    <property type="molecule type" value="mRNA"/>
</dbReference>
<dbReference type="EMBL" id="X03910">
    <property type="protein sequence ID" value="CAA27544.1"/>
    <property type="status" value="ALT_SEQ"/>
    <property type="molecule type" value="mRNA"/>
</dbReference>
<dbReference type="EMBL" id="AF039575">
    <property type="protein sequence ID" value="AAB96683.1"/>
    <property type="molecule type" value="mRNA"/>
</dbReference>
<dbReference type="EMBL" id="M94630">
    <property type="protein sequence ID" value="AAA35781.1"/>
    <property type="status" value="ALT_SEQ"/>
    <property type="molecule type" value="mRNA"/>
</dbReference>
<dbReference type="CCDS" id="CCDS3590.1">
    <molecule id="Q14103-3"/>
</dbReference>
<dbReference type="CCDS" id="CCDS3591.1">
    <molecule id="Q14103-2"/>
</dbReference>
<dbReference type="CCDS" id="CCDS3592.1">
    <molecule id="Q14103-1"/>
</dbReference>
<dbReference type="CCDS" id="CCDS93554.1">
    <molecule id="Q14103-4"/>
</dbReference>
<dbReference type="PIR" id="A24016">
    <property type="entry name" value="A24016"/>
</dbReference>
<dbReference type="PIR" id="A44192">
    <property type="entry name" value="A44192"/>
</dbReference>
<dbReference type="PIR" id="B48138">
    <property type="entry name" value="B48138"/>
</dbReference>
<dbReference type="RefSeq" id="NP_001003810.1">
    <molecule id="Q14103-4"/>
    <property type="nucleotide sequence ID" value="NM_001003810.2"/>
</dbReference>
<dbReference type="RefSeq" id="NP_002129.2">
    <molecule id="Q14103-3"/>
    <property type="nucleotide sequence ID" value="NM_002138.3"/>
</dbReference>
<dbReference type="RefSeq" id="NP_112737.1">
    <molecule id="Q14103-2"/>
    <property type="nucleotide sequence ID" value="NM_031369.3"/>
</dbReference>
<dbReference type="RefSeq" id="NP_112738.1">
    <molecule id="Q14103-1"/>
    <property type="nucleotide sequence ID" value="NM_031370.3"/>
</dbReference>
<dbReference type="PDB" id="1HD0">
    <property type="method" value="NMR"/>
    <property type="chains" value="A=98-172"/>
</dbReference>
<dbReference type="PDB" id="1HD1">
    <property type="method" value="NMR"/>
    <property type="chains" value="A=98-172"/>
</dbReference>
<dbReference type="PDB" id="1IQT">
    <property type="method" value="NMR"/>
    <property type="chains" value="A=183-257"/>
</dbReference>
<dbReference type="PDB" id="1WTB">
    <property type="method" value="NMR"/>
    <property type="chains" value="A=181-259"/>
</dbReference>
<dbReference type="PDB" id="1X0F">
    <property type="method" value="NMR"/>
    <property type="chains" value="A=181-259"/>
</dbReference>
<dbReference type="PDB" id="2Z5N">
    <property type="method" value="X-ray"/>
    <property type="resolution" value="3.20 A"/>
    <property type="chains" value="B=332-355"/>
</dbReference>
<dbReference type="PDB" id="5IM0">
    <property type="method" value="X-ray"/>
    <property type="resolution" value="1.70 A"/>
    <property type="chains" value="A=71-175, B=96-175"/>
</dbReference>
<dbReference type="PDBsum" id="1HD0"/>
<dbReference type="PDBsum" id="1HD1"/>
<dbReference type="PDBsum" id="1IQT"/>
<dbReference type="PDBsum" id="1WTB"/>
<dbReference type="PDBsum" id="1X0F"/>
<dbReference type="PDBsum" id="2Z5N"/>
<dbReference type="PDBsum" id="5IM0"/>
<dbReference type="SMR" id="Q14103"/>
<dbReference type="BioGRID" id="109425">
    <property type="interactions" value="649"/>
</dbReference>
<dbReference type="ComplexPortal" id="CPX-1076">
    <property type="entry name" value="mCRD-poly(A)-bridging complex"/>
</dbReference>
<dbReference type="CORUM" id="Q14103"/>
<dbReference type="DIP" id="DIP-31163N"/>
<dbReference type="FunCoup" id="Q14103">
    <property type="interactions" value="4067"/>
</dbReference>
<dbReference type="IntAct" id="Q14103">
    <property type="interactions" value="252"/>
</dbReference>
<dbReference type="MINT" id="Q14103"/>
<dbReference type="STRING" id="9606.ENSP00000313199"/>
<dbReference type="ChEMBL" id="CHEMBL4296009"/>
<dbReference type="DrugBank" id="DB11638">
    <property type="generic name" value="Artenimol"/>
</dbReference>
<dbReference type="MoonDB" id="Q14103">
    <property type="type" value="Predicted"/>
</dbReference>
<dbReference type="GlyGen" id="Q14103">
    <property type="glycosylation" value="2 sites, 1 N-linked glycan (1 site), 1 O-linked glycan (1 site)"/>
</dbReference>
<dbReference type="iPTMnet" id="Q14103"/>
<dbReference type="MetOSite" id="Q14103"/>
<dbReference type="PhosphoSitePlus" id="Q14103"/>
<dbReference type="SwissPalm" id="Q14103"/>
<dbReference type="BioMuta" id="HNRNPD"/>
<dbReference type="DMDM" id="13124489"/>
<dbReference type="jPOST" id="Q14103"/>
<dbReference type="MassIVE" id="Q14103"/>
<dbReference type="PaxDb" id="9606-ENSP00000313199"/>
<dbReference type="PeptideAtlas" id="Q14103"/>
<dbReference type="ProteomicsDB" id="59811">
    <molecule id="Q14103-1"/>
</dbReference>
<dbReference type="ProteomicsDB" id="59812">
    <molecule id="Q14103-2"/>
</dbReference>
<dbReference type="ProteomicsDB" id="59813">
    <molecule id="Q14103-3"/>
</dbReference>
<dbReference type="ProteomicsDB" id="59814">
    <molecule id="Q14103-4"/>
</dbReference>
<dbReference type="Pumba" id="Q14103"/>
<dbReference type="TopDownProteomics" id="Q14103-1">
    <molecule id="Q14103-1"/>
</dbReference>
<dbReference type="TopDownProteomics" id="Q14103-2">
    <molecule id="Q14103-2"/>
</dbReference>
<dbReference type="TopDownProteomics" id="Q14103-3">
    <molecule id="Q14103-3"/>
</dbReference>
<dbReference type="Antibodypedia" id="1448">
    <property type="antibodies" value="442 antibodies from 33 providers"/>
</dbReference>
<dbReference type="DNASU" id="3184"/>
<dbReference type="Ensembl" id="ENST00000313899.12">
    <molecule id="Q14103-1"/>
    <property type="protein sequence ID" value="ENSP00000313199.7"/>
    <property type="gene ID" value="ENSG00000138668.20"/>
</dbReference>
<dbReference type="Ensembl" id="ENST00000352301.8">
    <molecule id="Q14103-2"/>
    <property type="protein sequence ID" value="ENSP00000305860.6"/>
    <property type="gene ID" value="ENSG00000138668.20"/>
</dbReference>
<dbReference type="Ensembl" id="ENST00000353341.8">
    <molecule id="Q14103-3"/>
    <property type="protein sequence ID" value="ENSP00000313327.6"/>
    <property type="gene ID" value="ENSG00000138668.20"/>
</dbReference>
<dbReference type="Ensembl" id="ENST00000503822.2">
    <molecule id="Q14103-4"/>
    <property type="protein sequence ID" value="ENSP00000422615.2"/>
    <property type="gene ID" value="ENSG00000138668.20"/>
</dbReference>
<dbReference type="Ensembl" id="ENST00000507010.6">
    <molecule id="Q14103-1"/>
    <property type="protein sequence ID" value="ENSP00000421952.2"/>
    <property type="gene ID" value="ENSG00000138668.20"/>
</dbReference>
<dbReference type="Ensembl" id="ENST00000703971.1">
    <molecule id="Q14103-2"/>
    <property type="protein sequence ID" value="ENSP00000515597.1"/>
    <property type="gene ID" value="ENSG00000138668.20"/>
</dbReference>
<dbReference type="GeneID" id="3184"/>
<dbReference type="KEGG" id="hsa:3184"/>
<dbReference type="MANE-Select" id="ENST00000313899.12">
    <property type="protein sequence ID" value="ENSP00000313199.7"/>
    <property type="RefSeq nucleotide sequence ID" value="NM_031370.3"/>
    <property type="RefSeq protein sequence ID" value="NP_112738.1"/>
</dbReference>
<dbReference type="UCSC" id="uc003hmm.2">
    <molecule id="Q14103-1"/>
    <property type="organism name" value="human"/>
</dbReference>
<dbReference type="AGR" id="HGNC:5036"/>
<dbReference type="CTD" id="3184"/>
<dbReference type="DisGeNET" id="3184"/>
<dbReference type="GeneCards" id="HNRNPD"/>
<dbReference type="HGNC" id="HGNC:5036">
    <property type="gene designation" value="HNRNPD"/>
</dbReference>
<dbReference type="HPA" id="ENSG00000138668">
    <property type="expression patterns" value="Low tissue specificity"/>
</dbReference>
<dbReference type="MalaCards" id="HNRNPD"/>
<dbReference type="MIM" id="601324">
    <property type="type" value="gene"/>
</dbReference>
<dbReference type="neXtProt" id="NX_Q14103"/>
<dbReference type="OpenTargets" id="ENSG00000138668"/>
<dbReference type="PharmGKB" id="PA29361"/>
<dbReference type="VEuPathDB" id="HostDB:ENSG00000138668"/>
<dbReference type="eggNOG" id="KOG0118">
    <property type="taxonomic scope" value="Eukaryota"/>
</dbReference>
<dbReference type="GeneTree" id="ENSGT00940000158010"/>
<dbReference type="InParanoid" id="Q14103"/>
<dbReference type="OMA" id="LQDEHTI"/>
<dbReference type="OrthoDB" id="1875751at2759"/>
<dbReference type="PAN-GO" id="Q14103">
    <property type="GO annotations" value="3 GO annotations based on evolutionary models"/>
</dbReference>
<dbReference type="PhylomeDB" id="Q14103"/>
<dbReference type="TreeFam" id="TF314808"/>
<dbReference type="PathwayCommons" id="Q14103"/>
<dbReference type="Reactome" id="R-HSA-450408">
    <property type="pathway name" value="AUF1 (hnRNP D0) binds and destabilizes mRNA"/>
</dbReference>
<dbReference type="Reactome" id="R-HSA-72163">
    <property type="pathway name" value="mRNA Splicing - Major Pathway"/>
</dbReference>
<dbReference type="Reactome" id="R-HSA-72203">
    <property type="pathway name" value="Processing of Capped Intron-Containing Pre-mRNA"/>
</dbReference>
<dbReference type="SignaLink" id="Q14103"/>
<dbReference type="SIGNOR" id="Q14103"/>
<dbReference type="BioGRID-ORCS" id="3184">
    <property type="hits" value="67 hits in 1172 CRISPR screens"/>
</dbReference>
<dbReference type="CD-CODE" id="462A97B5">
    <property type="entry name" value="Leucocyte nuclear body"/>
</dbReference>
<dbReference type="CD-CODE" id="62EA6512">
    <property type="entry name" value="Sam68 nuclear body"/>
</dbReference>
<dbReference type="CD-CODE" id="91857CE7">
    <property type="entry name" value="Nucleolus"/>
</dbReference>
<dbReference type="CD-CODE" id="DEE660B4">
    <property type="entry name" value="Stress granule"/>
</dbReference>
<dbReference type="CD-CODE" id="EC23E69A">
    <property type="entry name" value="Synthetic Condensate 000107"/>
</dbReference>
<dbReference type="CD-CODE" id="F85A2E29">
    <property type="entry name" value="IMP1 RNP granule"/>
</dbReference>
<dbReference type="ChiTaRS" id="HNRNPD">
    <property type="organism name" value="human"/>
</dbReference>
<dbReference type="EvolutionaryTrace" id="Q14103"/>
<dbReference type="GeneWiki" id="HNRPD"/>
<dbReference type="GenomeRNAi" id="3184"/>
<dbReference type="Pharos" id="Q14103">
    <property type="development level" value="Tbio"/>
</dbReference>
<dbReference type="PRO" id="PR:Q14103"/>
<dbReference type="Proteomes" id="UP000005640">
    <property type="component" value="Chromosome 4"/>
</dbReference>
<dbReference type="RNAct" id="Q14103">
    <property type="molecule type" value="protein"/>
</dbReference>
<dbReference type="Bgee" id="ENSG00000138668">
    <property type="expression patterns" value="Expressed in ganglionic eminence and 208 other cell types or tissues"/>
</dbReference>
<dbReference type="ExpressionAtlas" id="Q14103">
    <property type="expression patterns" value="baseline and differential"/>
</dbReference>
<dbReference type="GO" id="GO:0000785">
    <property type="term" value="C:chromatin"/>
    <property type="evidence" value="ECO:0000318"/>
    <property type="project" value="GO_Central"/>
</dbReference>
<dbReference type="GO" id="GO:0005829">
    <property type="term" value="C:cytosol"/>
    <property type="evidence" value="ECO:0000314"/>
    <property type="project" value="ComplexPortal"/>
</dbReference>
<dbReference type="GO" id="GO:0098978">
    <property type="term" value="C:glutamatergic synapse"/>
    <property type="evidence" value="ECO:0007669"/>
    <property type="project" value="Ensembl"/>
</dbReference>
<dbReference type="GO" id="GO:0106002">
    <property type="term" value="C:mCRD-mediated mRNA stability complex"/>
    <property type="evidence" value="ECO:0000353"/>
    <property type="project" value="ComplexPortal"/>
</dbReference>
<dbReference type="GO" id="GO:0005654">
    <property type="term" value="C:nucleoplasm"/>
    <property type="evidence" value="ECO:0000314"/>
    <property type="project" value="HPA"/>
</dbReference>
<dbReference type="GO" id="GO:0005634">
    <property type="term" value="C:nucleus"/>
    <property type="evidence" value="ECO:0000304"/>
    <property type="project" value="ProtInc"/>
</dbReference>
<dbReference type="GO" id="GO:0014069">
    <property type="term" value="C:postsynaptic density"/>
    <property type="evidence" value="ECO:0007669"/>
    <property type="project" value="Ensembl"/>
</dbReference>
<dbReference type="GO" id="GO:1990904">
    <property type="term" value="C:ribonucleoprotein complex"/>
    <property type="evidence" value="ECO:0000314"/>
    <property type="project" value="UniProtKB"/>
</dbReference>
<dbReference type="GO" id="GO:0003682">
    <property type="term" value="F:chromatin binding"/>
    <property type="evidence" value="ECO:0007669"/>
    <property type="project" value="Ensembl"/>
</dbReference>
<dbReference type="GO" id="GO:0042826">
    <property type="term" value="F:histone deacetylase binding"/>
    <property type="evidence" value="ECO:0007669"/>
    <property type="project" value="Ensembl"/>
</dbReference>
<dbReference type="GO" id="GO:0003680">
    <property type="term" value="F:minor groove of adenine-thymine-rich DNA binding"/>
    <property type="evidence" value="ECO:0007669"/>
    <property type="project" value="Ensembl"/>
</dbReference>
<dbReference type="GO" id="GO:0035925">
    <property type="term" value="F:mRNA 3'-UTR AU-rich region binding"/>
    <property type="evidence" value="ECO:0007669"/>
    <property type="project" value="Ensembl"/>
</dbReference>
<dbReference type="GO" id="GO:0003723">
    <property type="term" value="F:RNA binding"/>
    <property type="evidence" value="ECO:0000314"/>
    <property type="project" value="UniProtKB"/>
</dbReference>
<dbReference type="GO" id="GO:0042162">
    <property type="term" value="F:telomeric DNA binding"/>
    <property type="evidence" value="ECO:0000314"/>
    <property type="project" value="UniProtKB"/>
</dbReference>
<dbReference type="GO" id="GO:0061158">
    <property type="term" value="P:3'-UTR-mediated mRNA destabilization"/>
    <property type="evidence" value="ECO:0007669"/>
    <property type="project" value="Ensembl"/>
</dbReference>
<dbReference type="GO" id="GO:0071230">
    <property type="term" value="P:cellular response to amino acid stimulus"/>
    <property type="evidence" value="ECO:0007669"/>
    <property type="project" value="Ensembl"/>
</dbReference>
<dbReference type="GO" id="GO:0071392">
    <property type="term" value="P:cellular response to estradiol stimulus"/>
    <property type="evidence" value="ECO:0007669"/>
    <property type="project" value="Ensembl"/>
</dbReference>
<dbReference type="GO" id="GO:0071732">
    <property type="term" value="P:cellular response to nitric oxide"/>
    <property type="evidence" value="ECO:0007669"/>
    <property type="project" value="Ensembl"/>
</dbReference>
<dbReference type="GO" id="GO:1904586">
    <property type="term" value="P:cellular response to putrescine"/>
    <property type="evidence" value="ECO:0007669"/>
    <property type="project" value="Ensembl"/>
</dbReference>
<dbReference type="GO" id="GO:0021549">
    <property type="term" value="P:cerebellum development"/>
    <property type="evidence" value="ECO:0007669"/>
    <property type="project" value="Ensembl"/>
</dbReference>
<dbReference type="GO" id="GO:0097167">
    <property type="term" value="P:circadian regulation of translation"/>
    <property type="evidence" value="ECO:0000315"/>
    <property type="project" value="UniProtKB"/>
</dbReference>
<dbReference type="GO" id="GO:0070934">
    <property type="term" value="P:CRD-mediated mRNA stabilization"/>
    <property type="evidence" value="ECO:0000314"/>
    <property type="project" value="ComplexPortal"/>
</dbReference>
<dbReference type="GO" id="GO:1990828">
    <property type="term" value="P:hepatocyte dedifferentiation"/>
    <property type="evidence" value="ECO:0007669"/>
    <property type="project" value="Ensembl"/>
</dbReference>
<dbReference type="GO" id="GO:0001889">
    <property type="term" value="P:liver development"/>
    <property type="evidence" value="ECO:0007669"/>
    <property type="project" value="Ensembl"/>
</dbReference>
<dbReference type="GO" id="GO:1900152">
    <property type="term" value="P:negative regulation of nuclear-transcribed mRNA catabolic process, deadenylation-dependent decay"/>
    <property type="evidence" value="ECO:0000314"/>
    <property type="project" value="ComplexPortal"/>
</dbReference>
<dbReference type="GO" id="GO:2000767">
    <property type="term" value="P:positive regulation of cytoplasmic translation"/>
    <property type="evidence" value="ECO:0000314"/>
    <property type="project" value="ComplexPortal"/>
</dbReference>
<dbReference type="GO" id="GO:0045893">
    <property type="term" value="P:positive regulation of DNA-templated transcription"/>
    <property type="evidence" value="ECO:0000303"/>
    <property type="project" value="UniProtKB"/>
</dbReference>
<dbReference type="GO" id="GO:1904355">
    <property type="term" value="P:positive regulation of telomere capping"/>
    <property type="evidence" value="ECO:0000250"/>
    <property type="project" value="BHF-UCL"/>
</dbReference>
<dbReference type="GO" id="GO:0032212">
    <property type="term" value="P:positive regulation of telomere maintenance via telomerase"/>
    <property type="evidence" value="ECO:0000250"/>
    <property type="project" value="BHF-UCL"/>
</dbReference>
<dbReference type="GO" id="GO:0045944">
    <property type="term" value="P:positive regulation of transcription by RNA polymerase II"/>
    <property type="evidence" value="ECO:0000250"/>
    <property type="project" value="BHF-UCL"/>
</dbReference>
<dbReference type="GO" id="GO:0045727">
    <property type="term" value="P:positive regulation of translation"/>
    <property type="evidence" value="ECO:0000315"/>
    <property type="project" value="UniProtKB"/>
</dbReference>
<dbReference type="GO" id="GO:0042752">
    <property type="term" value="P:regulation of circadian rhythm"/>
    <property type="evidence" value="ECO:0000315"/>
    <property type="project" value="UniProtKB"/>
</dbReference>
<dbReference type="GO" id="GO:0006355">
    <property type="term" value="P:regulation of DNA-templated transcription"/>
    <property type="evidence" value="ECO:0000303"/>
    <property type="project" value="UniProtKB"/>
</dbReference>
<dbReference type="GO" id="GO:0010468">
    <property type="term" value="P:regulation of gene expression"/>
    <property type="evidence" value="ECO:0000318"/>
    <property type="project" value="GO_Central"/>
</dbReference>
<dbReference type="GO" id="GO:0051592">
    <property type="term" value="P:response to calcium ion"/>
    <property type="evidence" value="ECO:0007669"/>
    <property type="project" value="Ensembl"/>
</dbReference>
<dbReference type="GO" id="GO:0051602">
    <property type="term" value="P:response to electrical stimulus"/>
    <property type="evidence" value="ECO:0007669"/>
    <property type="project" value="Ensembl"/>
</dbReference>
<dbReference type="GO" id="GO:1901355">
    <property type="term" value="P:response to rapamycin"/>
    <property type="evidence" value="ECO:0007669"/>
    <property type="project" value="Ensembl"/>
</dbReference>
<dbReference type="GO" id="GO:1904383">
    <property type="term" value="P:response to sodium phosphate"/>
    <property type="evidence" value="ECO:0007669"/>
    <property type="project" value="Ensembl"/>
</dbReference>
<dbReference type="GO" id="GO:0006401">
    <property type="term" value="P:RNA catabolic process"/>
    <property type="evidence" value="ECO:0000304"/>
    <property type="project" value="ProtInc"/>
</dbReference>
<dbReference type="GO" id="GO:0006396">
    <property type="term" value="P:RNA processing"/>
    <property type="evidence" value="ECO:0000304"/>
    <property type="project" value="ProtInc"/>
</dbReference>
<dbReference type="CDD" id="cd12756">
    <property type="entry name" value="RRM1_hnRNPD"/>
    <property type="match status" value="1"/>
</dbReference>
<dbReference type="CDD" id="cd12583">
    <property type="entry name" value="RRM2_hnRNPD"/>
    <property type="match status" value="1"/>
</dbReference>
<dbReference type="FunFam" id="3.30.70.330:FF:000156">
    <property type="entry name" value="Heterogeneous nuclear ribonucleoprotein d0 isoform"/>
    <property type="match status" value="1"/>
</dbReference>
<dbReference type="FunFam" id="3.30.70.330:FF:000369">
    <property type="entry name" value="heterogeneous nuclear ribonucleoprotein D0 isoform X1"/>
    <property type="match status" value="1"/>
</dbReference>
<dbReference type="Gene3D" id="3.30.70.330">
    <property type="match status" value="2"/>
</dbReference>
<dbReference type="IDEAL" id="IID00075"/>
<dbReference type="InterPro" id="IPR012956">
    <property type="entry name" value="CARG-binding_factor_N"/>
</dbReference>
<dbReference type="InterPro" id="IPR012677">
    <property type="entry name" value="Nucleotide-bd_a/b_plait_sf"/>
</dbReference>
<dbReference type="InterPro" id="IPR035979">
    <property type="entry name" value="RBD_domain_sf"/>
</dbReference>
<dbReference type="InterPro" id="IPR000504">
    <property type="entry name" value="RRM_dom"/>
</dbReference>
<dbReference type="PANTHER" id="PTHR48033:SF3">
    <property type="entry name" value="HETEROGENEOUS NUCLEAR RIBONUCLEOPROTEIN D0"/>
    <property type="match status" value="1"/>
</dbReference>
<dbReference type="PANTHER" id="PTHR48033">
    <property type="entry name" value="RNA-BINDING (RRM/RBD/RNP MOTIFS) FAMILY PROTEIN"/>
    <property type="match status" value="1"/>
</dbReference>
<dbReference type="Pfam" id="PF08143">
    <property type="entry name" value="CBFNT"/>
    <property type="match status" value="1"/>
</dbReference>
<dbReference type="Pfam" id="PF00076">
    <property type="entry name" value="RRM_1"/>
    <property type="match status" value="2"/>
</dbReference>
<dbReference type="SMART" id="SM00360">
    <property type="entry name" value="RRM"/>
    <property type="match status" value="2"/>
</dbReference>
<dbReference type="SUPFAM" id="SSF54928">
    <property type="entry name" value="RNA-binding domain, RBD"/>
    <property type="match status" value="2"/>
</dbReference>
<dbReference type="PROSITE" id="PS50102">
    <property type="entry name" value="RRM"/>
    <property type="match status" value="2"/>
</dbReference>
<comment type="function">
    <text evidence="5 6 10">Binds with high affinity to RNA molecules that contain AU-rich elements (AREs) found within the 3'-UTR of many proto-oncogenes and cytokine mRNAs. Also binds to double- and single-stranded DNA sequences in a specific manner and functions a transcription factor. Each of the RNA-binding domains specifically can bind solely to a single-stranded non-monotonous 5'-UUAG-3' sequence and also weaker to the single-stranded 5'-TTAGGG-3' telomeric DNA repeat. Binds RNA oligonucleotides with 5'-UUAGGG-3' repeats more tightly than the telomeric single-stranded DNA 5'-TTAGGG-3' repeats. Binding of RRM1 to DNA inhibits the formation of DNA quadruplex structure which may play a role in telomere elongation. May be involved in translationally coupled mRNA turnover. Implicated with other RNA-binding proteins in the cytoplasmic deadenylation/translational and decay interplay of the FOS mRNA mediated by the major coding-region determinant of instability (mCRD) domain. May play a role in the regulation of the rhythmic expression of circadian clock core genes. Directly binds to the 3'UTR of CRY1 mRNA and induces CRY1 rhythmic translation. May also be involved in the regulation of PER2 translation.</text>
</comment>
<comment type="subunit">
    <text evidence="6 7 8 9 10">Identified in a IGF2BP1-dependent mRNP granule complex containing untranslated mRNAs. Part of a complex associated with the FOS mCRD domain and consisting of PABPC1, PAIP1, CSDE1/UNR and SYNCRIP. Interacts with IGF2BP2. Interacts with GTPBP1. Interacts with EIF4G1; the interaction requires RNA. Interacts with EIF3B and RPS3.</text>
</comment>
<comment type="interaction">
    <interactant intactId="EBI-299674">
        <id>Q14103</id>
    </interactant>
    <interactant intactId="EBI-299649">
        <id>P22626</id>
        <label>HNRNPA2B1</label>
    </interactant>
    <organismsDiffer>false</organismsDiffer>
    <experiments>4</experiments>
</comment>
<comment type="interaction">
    <interactant intactId="EBI-299674">
        <id>Q14103</id>
    </interactant>
    <interactant intactId="EBI-357966">
        <id>P07910</id>
        <label>HNRNPC</label>
    </interactant>
    <organismsDiffer>false</organismsDiffer>
    <experiments>3</experiments>
</comment>
<comment type="interaction">
    <interactant intactId="EBI-299674">
        <id>Q14103</id>
    </interactant>
    <interactant intactId="EBI-299727">
        <id>O14979</id>
        <label>HNRNPDL</label>
    </interactant>
    <organismsDiffer>false</organismsDiffer>
    <experiments>2</experiments>
</comment>
<comment type="interaction">
    <interactant intactId="EBI-299674">
        <id>Q14103</id>
    </interactant>
    <interactant intactId="EBI-351126">
        <id>Q00839</id>
        <label>HNRNPU</label>
    </interactant>
    <organismsDiffer>false</organismsDiffer>
    <experiments>5</experiments>
</comment>
<comment type="interaction">
    <interactant intactId="EBI-299674">
        <id>Q14103</id>
    </interactant>
    <interactant intactId="EBI-2866661">
        <id>Q9UNL4</id>
        <label>ING4</label>
    </interactant>
    <organismsDiffer>false</organismsDiffer>
    <experiments>9</experiments>
</comment>
<comment type="interaction">
    <interactant intactId="EBI-299674">
        <id>Q14103</id>
    </interactant>
    <interactant intactId="EBI-1108377">
        <id>Q9BYZ2</id>
        <label>LDHAL6B</label>
    </interactant>
    <organismsDiffer>false</organismsDiffer>
    <experiments>2</experiments>
</comment>
<comment type="interaction">
    <interactant intactId="EBI-432545">
        <id>Q14103-4</id>
    </interactant>
    <interactant intactId="EBI-73711">
        <id>Q04637</id>
        <label>EIF4G1</label>
    </interactant>
    <organismsDiffer>false</organismsDiffer>
    <experiments>3</experiments>
</comment>
<comment type="interaction">
    <interactant intactId="EBI-432545">
        <id>Q14103-4</id>
    </interactant>
    <interactant intactId="EBI-1024419">
        <id>Q9Y6M1</id>
        <label>IGF2BP2</label>
    </interactant>
    <organismsDiffer>false</organismsDiffer>
    <experiments>4</experiments>
</comment>
<comment type="interaction">
    <interactant intactId="EBI-432545">
        <id>Q14103-4</id>
    </interactant>
    <interactant intactId="EBI-2866661">
        <id>Q9UNL4</id>
        <label>ING4</label>
    </interactant>
    <organismsDiffer>false</organismsDiffer>
    <experiments>2</experiments>
</comment>
<comment type="interaction">
    <interactant intactId="EBI-432545">
        <id>Q14103-4</id>
    </interactant>
    <interactant intactId="EBI-81531">
        <id>P11940</id>
        <label>PABPC1</label>
    </interactant>
    <organismsDiffer>false</organismsDiffer>
    <experiments>2</experiments>
</comment>
<comment type="interaction">
    <interactant intactId="EBI-432545">
        <id>Q14103-4</id>
    </interactant>
    <interactant intactId="EBI-476295">
        <id>P31947</id>
        <label>SFN</label>
    </interactant>
    <organismsDiffer>false</organismsDiffer>
    <experiments>7</experiments>
</comment>
<comment type="interaction">
    <interactant intactId="EBI-432545">
        <id>Q14103-4</id>
    </interactant>
    <interactant intactId="EBI-1024357">
        <id>O60506</id>
        <label>SYNCRIP</label>
    </interactant>
    <organismsDiffer>false</organismsDiffer>
    <experiments>3</experiments>
</comment>
<comment type="interaction">
    <interactant intactId="EBI-432545">
        <id>Q14103-4</id>
    </interactant>
    <interactant intactId="EBI-354065">
        <id>P67809</id>
        <label>YBX1</label>
    </interactant>
    <organismsDiffer>false</organismsDiffer>
    <experiments>3</experiments>
</comment>
<comment type="subcellular location">
    <subcellularLocation>
        <location>Nucleus</location>
    </subcellularLocation>
    <subcellularLocation>
        <location>Cytoplasm</location>
    </subcellularLocation>
    <text>Localized in cytoplasmic mRNP granules containing untranslated mRNAs. Component of ribonucleosomes. Cytoplasmic localization oscillates diurnally.</text>
</comment>
<comment type="alternative products">
    <event type="alternative splicing"/>
    <isoform>
        <id>Q14103-1</id>
        <name>1</name>
        <name>p45</name>
        <name>Dx9</name>
        <sequence type="displayed"/>
    </isoform>
    <isoform>
        <id>Q14103-2</id>
        <name>2</name>
        <name>p42</name>
        <name>Dx4</name>
        <sequence type="described" ref="VSP_005834"/>
    </isoform>
    <isoform>
        <id>Q14103-3</id>
        <name>3</name>
        <name>p40</name>
        <name>Dx7</name>
        <sequence type="described" ref="VSP_005835"/>
    </isoform>
    <isoform>
        <id>Q14103-4</id>
        <name>4</name>
        <name>p37</name>
        <sequence type="described" ref="VSP_005834 VSP_005835"/>
    </isoform>
</comment>
<comment type="PTM">
    <text>Arg-345 is dimethylated, probably to asymmetric dimethylarginine.</text>
</comment>
<comment type="PTM">
    <text evidence="1">Methylated by PRMT1, in an insulin-dependent manner. The PRMT1-mediated methylation regulates tyrosine phosphorylation (By similarity).</text>
</comment>
<comment type="sequence caution" evidence="17">
    <conflict type="frameshift">
        <sequence resource="EMBL-CDS" id="AAA35781"/>
    </conflict>
</comment>
<comment type="sequence caution" evidence="17">
    <conflict type="miscellaneous discrepancy">
        <sequence resource="EMBL-CDS" id="AAA35781"/>
    </conflict>
    <text>Contaminating sequence. Sequence of unknown origin in the N-terminal part.</text>
</comment>
<comment type="sequence caution" evidence="17">
    <conflict type="miscellaneous discrepancy">
        <sequence resource="EMBL-CDS" id="CAA27544"/>
    </conflict>
    <text>Several sequence conflicts.</text>
</comment>
<comment type="online information" name="Atlas of Genetics and Cytogenetics in Oncology and Haematology">
    <link uri="https://atlasgeneticsoncology.org/gene/40840/HNRNPD"/>
</comment>
<accession>Q14103</accession>
<accession>A8K9J2</accession>
<accession>P07029</accession>
<accession>Q01858</accession>
<accession>Q14100</accession>
<accession>Q14101</accession>
<accession>Q14102</accession>
<accession>Q4W5A1</accession>
<accession>Q9UCE8</accession>
<accession>Q9UCE9</accession>
<reference key="1">
    <citation type="journal article" date="1995" name="J. Biol. Chem.">
        <title>The UUAG-specific RNA binding protein, heterogeneous nuclear ribonucleoprotein D0. Common modular structure and binding properties of the 2xRBD-Gly family.</title>
        <authorList>
            <person name="Kajita Y."/>
            <person name="Nakayama J."/>
            <person name="Aizawa M."/>
            <person name="Ishikawa F."/>
        </authorList>
    </citation>
    <scope>NUCLEOTIDE SEQUENCE [MRNA] (ISOFORMS 1 AND 3)</scope>
    <scope>NUCLEOTIDE SEQUENCE [MRNA] OF 70-355 (ISOFORM 2)</scope>
    <source>
        <tissue>Cervix carcinoma</tissue>
    </source>
</reference>
<reference key="2">
    <citation type="journal article" date="1998" name="Genomics">
        <title>The human HNRPD locus maps to 4q21 and encodes a highly conserved protein.</title>
        <authorList>
            <person name="Dempsey L.A."/>
            <person name="Li M.-J."/>
            <person name="DePace A."/>
            <person name="Bray-Ward P."/>
            <person name="Maizels N."/>
        </authorList>
    </citation>
    <scope>NUCLEOTIDE SEQUENCE [GENOMIC DNA]</scope>
    <scope>ALTERNATIVE SPLICING</scope>
</reference>
<reference key="3">
    <citation type="journal article" date="2004" name="Nat. Genet.">
        <title>Complete sequencing and characterization of 21,243 full-length human cDNAs.</title>
        <authorList>
            <person name="Ota T."/>
            <person name="Suzuki Y."/>
            <person name="Nishikawa T."/>
            <person name="Otsuki T."/>
            <person name="Sugiyama T."/>
            <person name="Irie R."/>
            <person name="Wakamatsu A."/>
            <person name="Hayashi K."/>
            <person name="Sato H."/>
            <person name="Nagai K."/>
            <person name="Kimura K."/>
            <person name="Makita H."/>
            <person name="Sekine M."/>
            <person name="Obayashi M."/>
            <person name="Nishi T."/>
            <person name="Shibahara T."/>
            <person name="Tanaka T."/>
            <person name="Ishii S."/>
            <person name="Yamamoto J."/>
            <person name="Saito K."/>
            <person name="Kawai Y."/>
            <person name="Isono Y."/>
            <person name="Nakamura Y."/>
            <person name="Nagahari K."/>
            <person name="Murakami K."/>
            <person name="Yasuda T."/>
            <person name="Iwayanagi T."/>
            <person name="Wagatsuma M."/>
            <person name="Shiratori A."/>
            <person name="Sudo H."/>
            <person name="Hosoiri T."/>
            <person name="Kaku Y."/>
            <person name="Kodaira H."/>
            <person name="Kondo H."/>
            <person name="Sugawara M."/>
            <person name="Takahashi M."/>
            <person name="Kanda K."/>
            <person name="Yokoi T."/>
            <person name="Furuya T."/>
            <person name="Kikkawa E."/>
            <person name="Omura Y."/>
            <person name="Abe K."/>
            <person name="Kamihara K."/>
            <person name="Katsuta N."/>
            <person name="Sato K."/>
            <person name="Tanikawa M."/>
            <person name="Yamazaki M."/>
            <person name="Ninomiya K."/>
            <person name="Ishibashi T."/>
            <person name="Yamashita H."/>
            <person name="Murakawa K."/>
            <person name="Fujimori K."/>
            <person name="Tanai H."/>
            <person name="Kimata M."/>
            <person name="Watanabe M."/>
            <person name="Hiraoka S."/>
            <person name="Chiba Y."/>
            <person name="Ishida S."/>
            <person name="Ono Y."/>
            <person name="Takiguchi S."/>
            <person name="Watanabe S."/>
            <person name="Yosida M."/>
            <person name="Hotuta T."/>
            <person name="Kusano J."/>
            <person name="Kanehori K."/>
            <person name="Takahashi-Fujii A."/>
            <person name="Hara H."/>
            <person name="Tanase T.-O."/>
            <person name="Nomura Y."/>
            <person name="Togiya S."/>
            <person name="Komai F."/>
            <person name="Hara R."/>
            <person name="Takeuchi K."/>
            <person name="Arita M."/>
            <person name="Imose N."/>
            <person name="Musashino K."/>
            <person name="Yuuki H."/>
            <person name="Oshima A."/>
            <person name="Sasaki N."/>
            <person name="Aotsuka S."/>
            <person name="Yoshikawa Y."/>
            <person name="Matsunawa H."/>
            <person name="Ichihara T."/>
            <person name="Shiohata N."/>
            <person name="Sano S."/>
            <person name="Moriya S."/>
            <person name="Momiyama H."/>
            <person name="Satoh N."/>
            <person name="Takami S."/>
            <person name="Terashima Y."/>
            <person name="Suzuki O."/>
            <person name="Nakagawa S."/>
            <person name="Senoh A."/>
            <person name="Mizoguchi H."/>
            <person name="Goto Y."/>
            <person name="Shimizu F."/>
            <person name="Wakebe H."/>
            <person name="Hishigaki H."/>
            <person name="Watanabe T."/>
            <person name="Sugiyama A."/>
            <person name="Takemoto M."/>
            <person name="Kawakami B."/>
            <person name="Yamazaki M."/>
            <person name="Watanabe K."/>
            <person name="Kumagai A."/>
            <person name="Itakura S."/>
            <person name="Fukuzumi Y."/>
            <person name="Fujimori Y."/>
            <person name="Komiyama M."/>
            <person name="Tashiro H."/>
            <person name="Tanigami A."/>
            <person name="Fujiwara T."/>
            <person name="Ono T."/>
            <person name="Yamada K."/>
            <person name="Fujii Y."/>
            <person name="Ozaki K."/>
            <person name="Hirao M."/>
            <person name="Ohmori Y."/>
            <person name="Kawabata A."/>
            <person name="Hikiji T."/>
            <person name="Kobatake N."/>
            <person name="Inagaki H."/>
            <person name="Ikema Y."/>
            <person name="Okamoto S."/>
            <person name="Okitani R."/>
            <person name="Kawakami T."/>
            <person name="Noguchi S."/>
            <person name="Itoh T."/>
            <person name="Shigeta K."/>
            <person name="Senba T."/>
            <person name="Matsumura K."/>
            <person name="Nakajima Y."/>
            <person name="Mizuno T."/>
            <person name="Morinaga M."/>
            <person name="Sasaki M."/>
            <person name="Togashi T."/>
            <person name="Oyama M."/>
            <person name="Hata H."/>
            <person name="Watanabe M."/>
            <person name="Komatsu T."/>
            <person name="Mizushima-Sugano J."/>
            <person name="Satoh T."/>
            <person name="Shirai Y."/>
            <person name="Takahashi Y."/>
            <person name="Nakagawa K."/>
            <person name="Okumura K."/>
            <person name="Nagase T."/>
            <person name="Nomura N."/>
            <person name="Kikuchi H."/>
            <person name="Masuho Y."/>
            <person name="Yamashita R."/>
            <person name="Nakai K."/>
            <person name="Yada T."/>
            <person name="Nakamura Y."/>
            <person name="Ohara O."/>
            <person name="Isogai T."/>
            <person name="Sugano S."/>
        </authorList>
    </citation>
    <scope>NUCLEOTIDE SEQUENCE [LARGE SCALE MRNA] (ISOFORM 2)</scope>
    <source>
        <tissue>Thymus</tissue>
    </source>
</reference>
<reference key="4">
    <citation type="journal article" date="2005" name="Nature">
        <title>Generation and annotation of the DNA sequences of human chromosomes 2 and 4.</title>
        <authorList>
            <person name="Hillier L.W."/>
            <person name="Graves T.A."/>
            <person name="Fulton R.S."/>
            <person name="Fulton L.A."/>
            <person name="Pepin K.H."/>
            <person name="Minx P."/>
            <person name="Wagner-McPherson C."/>
            <person name="Layman D."/>
            <person name="Wylie K."/>
            <person name="Sekhon M."/>
            <person name="Becker M.C."/>
            <person name="Fewell G.A."/>
            <person name="Delehaunty K.D."/>
            <person name="Miner T.L."/>
            <person name="Nash W.E."/>
            <person name="Kremitzki C."/>
            <person name="Oddy L."/>
            <person name="Du H."/>
            <person name="Sun H."/>
            <person name="Bradshaw-Cordum H."/>
            <person name="Ali J."/>
            <person name="Carter J."/>
            <person name="Cordes M."/>
            <person name="Harris A."/>
            <person name="Isak A."/>
            <person name="van Brunt A."/>
            <person name="Nguyen C."/>
            <person name="Du F."/>
            <person name="Courtney L."/>
            <person name="Kalicki J."/>
            <person name="Ozersky P."/>
            <person name="Abbott S."/>
            <person name="Armstrong J."/>
            <person name="Belter E.A."/>
            <person name="Caruso L."/>
            <person name="Cedroni M."/>
            <person name="Cotton M."/>
            <person name="Davidson T."/>
            <person name="Desai A."/>
            <person name="Elliott G."/>
            <person name="Erb T."/>
            <person name="Fronick C."/>
            <person name="Gaige T."/>
            <person name="Haakenson W."/>
            <person name="Haglund K."/>
            <person name="Holmes A."/>
            <person name="Harkins R."/>
            <person name="Kim K."/>
            <person name="Kruchowski S.S."/>
            <person name="Strong C.M."/>
            <person name="Grewal N."/>
            <person name="Goyea E."/>
            <person name="Hou S."/>
            <person name="Levy A."/>
            <person name="Martinka S."/>
            <person name="Mead K."/>
            <person name="McLellan M.D."/>
            <person name="Meyer R."/>
            <person name="Randall-Maher J."/>
            <person name="Tomlinson C."/>
            <person name="Dauphin-Kohlberg S."/>
            <person name="Kozlowicz-Reilly A."/>
            <person name="Shah N."/>
            <person name="Swearengen-Shahid S."/>
            <person name="Snider J."/>
            <person name="Strong J.T."/>
            <person name="Thompson J."/>
            <person name="Yoakum M."/>
            <person name="Leonard S."/>
            <person name="Pearman C."/>
            <person name="Trani L."/>
            <person name="Radionenko M."/>
            <person name="Waligorski J.E."/>
            <person name="Wang C."/>
            <person name="Rock S.M."/>
            <person name="Tin-Wollam A.-M."/>
            <person name="Maupin R."/>
            <person name="Latreille P."/>
            <person name="Wendl M.C."/>
            <person name="Yang S.-P."/>
            <person name="Pohl C."/>
            <person name="Wallis J.W."/>
            <person name="Spieth J."/>
            <person name="Bieri T.A."/>
            <person name="Berkowicz N."/>
            <person name="Nelson J.O."/>
            <person name="Osborne J."/>
            <person name="Ding L."/>
            <person name="Meyer R."/>
            <person name="Sabo A."/>
            <person name="Shotland Y."/>
            <person name="Sinha P."/>
            <person name="Wohldmann P.E."/>
            <person name="Cook L.L."/>
            <person name="Hickenbotham M.T."/>
            <person name="Eldred J."/>
            <person name="Williams D."/>
            <person name="Jones T.A."/>
            <person name="She X."/>
            <person name="Ciccarelli F.D."/>
            <person name="Izaurralde E."/>
            <person name="Taylor J."/>
            <person name="Schmutz J."/>
            <person name="Myers R.M."/>
            <person name="Cox D.R."/>
            <person name="Huang X."/>
            <person name="McPherson J.D."/>
            <person name="Mardis E.R."/>
            <person name="Clifton S.W."/>
            <person name="Warren W.C."/>
            <person name="Chinwalla A.T."/>
            <person name="Eddy S.R."/>
            <person name="Marra M.A."/>
            <person name="Ovcharenko I."/>
            <person name="Furey T.S."/>
            <person name="Miller W."/>
            <person name="Eichler E.E."/>
            <person name="Bork P."/>
            <person name="Suyama M."/>
            <person name="Torrents D."/>
            <person name="Waterston R.H."/>
            <person name="Wilson R.K."/>
        </authorList>
    </citation>
    <scope>NUCLEOTIDE SEQUENCE [LARGE SCALE GENOMIC DNA]</scope>
</reference>
<reference key="5">
    <citation type="submission" date="2005-07" db="EMBL/GenBank/DDBJ databases">
        <authorList>
            <person name="Mural R.J."/>
            <person name="Istrail S."/>
            <person name="Sutton G.G."/>
            <person name="Florea L."/>
            <person name="Halpern A.L."/>
            <person name="Mobarry C.M."/>
            <person name="Lippert R."/>
            <person name="Walenz B."/>
            <person name="Shatkay H."/>
            <person name="Dew I."/>
            <person name="Miller J.R."/>
            <person name="Flanigan M.J."/>
            <person name="Edwards N.J."/>
            <person name="Bolanos R."/>
            <person name="Fasulo D."/>
            <person name="Halldorsson B.V."/>
            <person name="Hannenhalli S."/>
            <person name="Turner R."/>
            <person name="Yooseph S."/>
            <person name="Lu F."/>
            <person name="Nusskern D.R."/>
            <person name="Shue B.C."/>
            <person name="Zheng X.H."/>
            <person name="Zhong F."/>
            <person name="Delcher A.L."/>
            <person name="Huson D.H."/>
            <person name="Kravitz S.A."/>
            <person name="Mouchard L."/>
            <person name="Reinert K."/>
            <person name="Remington K.A."/>
            <person name="Clark A.G."/>
            <person name="Waterman M.S."/>
            <person name="Eichler E.E."/>
            <person name="Adams M.D."/>
            <person name="Hunkapiller M.W."/>
            <person name="Myers E.W."/>
            <person name="Venter J.C."/>
        </authorList>
    </citation>
    <scope>NUCLEOTIDE SEQUENCE [LARGE SCALE GENOMIC DNA]</scope>
</reference>
<reference key="6">
    <citation type="journal article" date="2004" name="Genome Res.">
        <title>The status, quality, and expansion of the NIH full-length cDNA project: the Mammalian Gene Collection (MGC).</title>
        <authorList>
            <consortium name="The MGC Project Team"/>
        </authorList>
    </citation>
    <scope>NUCLEOTIDE SEQUENCE [LARGE SCALE MRNA] (ISOFORMS 1 AND 3)</scope>
    <source>
        <tissue>Lung</tissue>
    </source>
</reference>
<reference key="7">
    <citation type="journal article" date="1986" name="Nucleic Acids Res.">
        <title>A cDNA clone of the hnRNP C proteins and its homology with the single-stranded DNA binding protein UP2.</title>
        <authorList>
            <person name="Lahiri D.K."/>
            <person name="Thomas J.O."/>
        </authorList>
    </citation>
    <scope>NUCLEOTIDE SEQUENCE [MRNA] OF 6-235</scope>
</reference>
<reference key="8">
    <citation type="journal article" date="1999" name="Biochem. J.">
        <title>Heterogeneous nuclear ribonucleoprotein D0B is a sequence-specific DNA-binding protein.</title>
        <authorList>
            <person name="Tolnay M."/>
            <person name="Vereshchagina L.A."/>
            <person name="Tsokos G.C."/>
        </authorList>
    </citation>
    <scope>NUCLEOTIDE SEQUENCE [MRNA] OF 9-355 (ISOFORM 3)</scope>
    <scope>CHARACTERIZATION</scope>
    <source>
        <tissue>Blood</tissue>
    </source>
</reference>
<reference key="9">
    <citation type="journal article" date="1992" name="J. Virol.">
        <title>Identification and cloning of a novel heterogeneous nuclear ribonucleoprotein C-like protein that functions as a transcriptional activator of the hepatitis B virus enhancer II.</title>
        <authorList>
            <person name="Tay N."/>
            <person name="Chan S.-H."/>
            <person name="Ren E.-C."/>
        </authorList>
    </citation>
    <scope>NUCLEOTIDE SEQUENCE [MRNA] OF 23-355 (ISOFORM 3)</scope>
</reference>
<reference key="10">
    <citation type="submission" date="2008-12" db="UniProtKB">
        <authorList>
            <person name="Bienvenut W.V."/>
            <person name="Lilla S."/>
            <person name="von Kriegsheim A."/>
            <person name="Lempens A."/>
            <person name="Kolch W."/>
        </authorList>
    </citation>
    <scope>PROTEIN SEQUENCE OF 68-85; 99-110; 112-129; 139-158; 184-218; 224-231 AND 261-272</scope>
    <scope>METHYLATION AT LYS-119</scope>
    <scope>IDENTIFICATION BY MASS SPECTROMETRY</scope>
    <source>
        <tissue>Ovarian carcinoma</tissue>
    </source>
</reference>
<reference key="11">
    <citation type="journal article" date="1993" name="Mol. Cell. Biol.">
        <title>Nuclear proteins that bind the pre-mRNA 3' splice site sequence r(UUAG/G) and the human telomeric DNA sequence d(TTAGGG)n.</title>
        <authorList>
            <person name="Ishikawa F."/>
            <person name="Matunis M.J."/>
            <person name="Dreyfuss G."/>
            <person name="Cech T.R."/>
        </authorList>
    </citation>
    <scope>PROTEIN SEQUENCE OF 139-157; 184-203 AND 224-237</scope>
    <scope>NUCLEOTIDE-BINDING</scope>
    <source>
        <tissue>Cervix carcinoma</tissue>
    </source>
</reference>
<reference key="12">
    <citation type="journal article" date="1998" name="Genomics">
        <title>Structure and genomic organization of the human AUF1 gene: alternative pre-mRNA splicing generates four protein isoforms.</title>
        <authorList>
            <person name="Wagner B.J."/>
            <person name="DeMaria C.T."/>
            <person name="Sun Y."/>
            <person name="Wilson G.M."/>
            <person name="Brewer G."/>
        </authorList>
    </citation>
    <scope>ALTERNATIVE SPLICING (ISOFORMS 1; 2; 3 AND 4)</scope>
</reference>
<reference key="13">
    <citation type="journal article" date="2000" name="Cell">
        <title>A mechanism for translationally coupled mRNA turnover: interaction between the poly(A) tail and a c-fos RNA coding determinant via a protein complex.</title>
        <authorList>
            <person name="Grosset C."/>
            <person name="Chen C.-Y.A."/>
            <person name="Xu N."/>
            <person name="Sonenberg N."/>
            <person name="Jacquemin-Sablon H."/>
            <person name="Shyu A.-B."/>
        </authorList>
    </citation>
    <scope>FUNCTION IN TRANSLATIONALLY COUPLED MRNA TURNOVER</scope>
    <scope>IDENTIFICATION IN A COMPLEX WITH SYNCRIP; PABPC1; PAIP1 AND CSDE1</scope>
    <source>
        <tissue>Placenta</tissue>
    </source>
</reference>
<reference key="14">
    <citation type="journal article" date="2003" name="Biol. Chem.">
        <title>Identification and characterization of proteins that selectively interact with isoforms of the mRNA binding protein AUF1 (hnRNP D).</title>
        <authorList>
            <person name="Moraes K.C."/>
            <person name="Quaresma A.J."/>
            <person name="Maehnss K."/>
            <person name="Kobarg J."/>
        </authorList>
    </citation>
    <scope>INTERACTION WITH IGF2BP2</scope>
</reference>
<reference key="15">
    <citation type="journal article" date="2003" name="Nature">
        <title>Proteomic characterization of the human centrosome by protein correlation profiling.</title>
        <authorList>
            <person name="Andersen J.S."/>
            <person name="Wilkinson C.J."/>
            <person name="Mayor T."/>
            <person name="Mortensen P."/>
            <person name="Nigg E.A."/>
            <person name="Mann M."/>
        </authorList>
    </citation>
    <scope>IDENTIFICATION BY MASS SPECTROMETRY</scope>
    <source>
        <tissue>Lymphoblast</tissue>
    </source>
</reference>
<reference key="16">
    <citation type="journal article" date="2004" name="Nat. Methods">
        <title>Identifying and quantifying in vivo methylation sites by heavy methyl SILAC.</title>
        <authorList>
            <person name="Ong S.E."/>
            <person name="Mittler G."/>
            <person name="Mann M."/>
        </authorList>
    </citation>
    <scope>METHYLATION [LARGE SCALE ANALYSIS] AT ARG-345</scope>
    <scope>IDENTIFICATION BY MASS SPECTROMETRY [LARGE SCALE ANALYSIS]</scope>
    <source>
        <tissue>Cervix carcinoma</tissue>
    </source>
</reference>
<reference key="17">
    <citation type="journal article" date="2006" name="Cell">
        <title>Global, in vivo, and site-specific phosphorylation dynamics in signaling networks.</title>
        <authorList>
            <person name="Olsen J.V."/>
            <person name="Blagoev B."/>
            <person name="Gnad F."/>
            <person name="Macek B."/>
            <person name="Kumar C."/>
            <person name="Mortensen P."/>
            <person name="Mann M."/>
        </authorList>
    </citation>
    <scope>PHOSPHORYLATION [LARGE SCALE ANALYSIS] AT SER-190</scope>
    <scope>IDENTIFICATION BY MASS SPECTROMETRY [LARGE SCALE ANALYSIS]</scope>
    <source>
        <tissue>Cervix carcinoma</tissue>
    </source>
</reference>
<reference key="18">
    <citation type="journal article" date="2007" name="Mol. Cell. Proteomics">
        <title>Molecular composition of IMP1 ribonucleoprotein granules.</title>
        <authorList>
            <person name="Joeson L."/>
            <person name="Vikesaa J."/>
            <person name="Krogh A."/>
            <person name="Nielsen L.K."/>
            <person name="Hansen T."/>
            <person name="Borup R."/>
            <person name="Johnsen A.H."/>
            <person name="Christiansen J."/>
            <person name="Nielsen F.C."/>
        </authorList>
    </citation>
    <scope>IDENTIFICATION IN A MRNP GRANULE COMPLEX</scope>
    <scope>IDENTIFICATION BY MASS SPECTROMETRY</scope>
    <scope>SUBCELLULAR LOCATION</scope>
</reference>
<reference key="19">
    <citation type="journal article" date="2008" name="J. Proteome Res.">
        <title>Phosphorylation analysis of primary human T lymphocytes using sequential IMAC and titanium oxide enrichment.</title>
        <authorList>
            <person name="Carrascal M."/>
            <person name="Ovelleiro D."/>
            <person name="Casas V."/>
            <person name="Gay M."/>
            <person name="Abian J."/>
        </authorList>
    </citation>
    <scope>IDENTIFICATION BY MASS SPECTROMETRY [LARGE SCALE ANALYSIS]</scope>
    <source>
        <tissue>T-cell</tissue>
    </source>
</reference>
<reference key="20">
    <citation type="journal article" date="2008" name="Mol. Cell">
        <title>Kinase-selective enrichment enables quantitative phosphoproteomics of the kinome across the cell cycle.</title>
        <authorList>
            <person name="Daub H."/>
            <person name="Olsen J.V."/>
            <person name="Bairlein M."/>
            <person name="Gnad F."/>
            <person name="Oppermann F.S."/>
            <person name="Korner R."/>
            <person name="Greff Z."/>
            <person name="Keri G."/>
            <person name="Stemmann O."/>
            <person name="Mann M."/>
        </authorList>
    </citation>
    <scope>PHOSPHORYLATION [LARGE SCALE ANALYSIS] AT THR-193</scope>
    <scope>IDENTIFICATION BY MASS SPECTROMETRY [LARGE SCALE ANALYSIS]</scope>
    <source>
        <tissue>Cervix carcinoma</tissue>
    </source>
</reference>
<reference key="21">
    <citation type="journal article" date="2008" name="Proc. Natl. Acad. Sci. U.S.A.">
        <title>A quantitative atlas of mitotic phosphorylation.</title>
        <authorList>
            <person name="Dephoure N."/>
            <person name="Zhou C."/>
            <person name="Villen J."/>
            <person name="Beausoleil S.A."/>
            <person name="Bakalarski C.E."/>
            <person name="Elledge S.J."/>
            <person name="Gygi S.P."/>
        </authorList>
    </citation>
    <scope>PHOSPHORYLATION [LARGE SCALE ANALYSIS] AT SER-82; SER-83; SER-190 AND THR-193</scope>
    <scope>IDENTIFICATION BY MASS SPECTROMETRY [LARGE SCALE ANALYSIS]</scope>
    <source>
        <tissue>Cervix carcinoma</tissue>
    </source>
</reference>
<reference key="22">
    <citation type="journal article" date="2008" name="Proteomics">
        <title>Large-scale phosphoproteome analysis of human liver tissue by enrichment and fractionation of phosphopeptides with strong anion exchange chromatography.</title>
        <authorList>
            <person name="Han G."/>
            <person name="Ye M."/>
            <person name="Zhou H."/>
            <person name="Jiang X."/>
            <person name="Feng S."/>
            <person name="Jiang X."/>
            <person name="Tian R."/>
            <person name="Wan D."/>
            <person name="Zou H."/>
            <person name="Gu J."/>
        </authorList>
    </citation>
    <scope>IDENTIFICATION BY MASS SPECTROMETRY [LARGE SCALE ANALYSIS]</scope>
    <source>
        <tissue>Liver</tissue>
    </source>
</reference>
<reference key="23">
    <citation type="journal article" date="2009" name="Anal. Chem.">
        <title>Lys-N and trypsin cover complementary parts of the phosphoproteome in a refined SCX-based approach.</title>
        <authorList>
            <person name="Gauci S."/>
            <person name="Helbig A.O."/>
            <person name="Slijper M."/>
            <person name="Krijgsveld J."/>
            <person name="Heck A.J."/>
            <person name="Mohammed S."/>
        </authorList>
    </citation>
    <scope>ACETYLATION [LARGE SCALE ANALYSIS] AT SER-2</scope>
    <scope>CLEAVAGE OF INITIATOR METHIONINE [LARGE SCALE ANALYSIS]</scope>
    <scope>IDENTIFICATION BY MASS SPECTROMETRY [LARGE SCALE ANALYSIS]</scope>
</reference>
<reference key="24">
    <citation type="journal article" date="2009" name="Mol. Cell. Proteomics">
        <title>Large-scale proteomics analysis of the human kinome.</title>
        <authorList>
            <person name="Oppermann F.S."/>
            <person name="Gnad F."/>
            <person name="Olsen J.V."/>
            <person name="Hornberger R."/>
            <person name="Greff Z."/>
            <person name="Keri G."/>
            <person name="Mann M."/>
            <person name="Daub H."/>
        </authorList>
    </citation>
    <scope>IDENTIFICATION BY MASS SPECTROMETRY [LARGE SCALE ANALYSIS]</scope>
</reference>
<reference key="25">
    <citation type="journal article" date="2009" name="Sci. Signal.">
        <title>Quantitative phosphoproteomic analysis of T cell receptor signaling reveals system-wide modulation of protein-protein interactions.</title>
        <authorList>
            <person name="Mayya V."/>
            <person name="Lundgren D.H."/>
            <person name="Hwang S.-I."/>
            <person name="Rezaul K."/>
            <person name="Wu L."/>
            <person name="Eng J.K."/>
            <person name="Rodionov V."/>
            <person name="Han D.K."/>
        </authorList>
    </citation>
    <scope>PHOSPHORYLATION [LARGE SCALE ANALYSIS] AT SER-82; SER-190 AND THR-193</scope>
    <scope>IDENTIFICATION BY MASS SPECTROMETRY [LARGE SCALE ANALYSIS]</scope>
    <source>
        <tissue>Leukemic T-cell</tissue>
    </source>
</reference>
<reference key="26">
    <citation type="journal article" date="2009" name="Science">
        <title>Lysine acetylation targets protein complexes and co-regulates major cellular functions.</title>
        <authorList>
            <person name="Choudhary C."/>
            <person name="Kumar C."/>
            <person name="Gnad F."/>
            <person name="Nielsen M.L."/>
            <person name="Rehman M."/>
            <person name="Walther T.C."/>
            <person name="Olsen J.V."/>
            <person name="Mann M."/>
        </authorList>
    </citation>
    <scope>ACETYLATION [LARGE SCALE ANALYSIS] AT LYS-165 AND LYS-251</scope>
    <scope>ACETYLATION [LARGE SCALE ANALYSIS] AT LYS-292 (ISOFORM 3)</scope>
    <scope>ACETYLATION [LARGE SCALE ANALYSIS] AT LYS-273 (ISOFORM 4)</scope>
    <scope>IDENTIFICATION BY MASS SPECTROMETRY [LARGE SCALE ANALYSIS]</scope>
</reference>
<reference key="27">
    <citation type="journal article" date="2010" name="Sci. Signal.">
        <title>Quantitative phosphoproteomics reveals widespread full phosphorylation site occupancy during mitosis.</title>
        <authorList>
            <person name="Olsen J.V."/>
            <person name="Vermeulen M."/>
            <person name="Santamaria A."/>
            <person name="Kumar C."/>
            <person name="Miller M.L."/>
            <person name="Jensen L.J."/>
            <person name="Gnad F."/>
            <person name="Cox J."/>
            <person name="Jensen T.S."/>
            <person name="Nigg E.A."/>
            <person name="Brunak S."/>
            <person name="Mann M."/>
        </authorList>
    </citation>
    <scope>PHOSPHORYLATION [LARGE SCALE ANALYSIS] AT SER-71; SER-80; SER-83; SER-190 AND THR-193</scope>
    <scope>IDENTIFICATION BY MASS SPECTROMETRY [LARGE SCALE ANALYSIS]</scope>
    <source>
        <tissue>Cervix carcinoma</tissue>
    </source>
</reference>
<reference key="28">
    <citation type="journal article" date="2011" name="BMC Syst. Biol.">
        <title>Initial characterization of the human central proteome.</title>
        <authorList>
            <person name="Burkard T.R."/>
            <person name="Planyavsky M."/>
            <person name="Kaupe I."/>
            <person name="Breitwieser F.P."/>
            <person name="Buerckstuemmer T."/>
            <person name="Bennett K.L."/>
            <person name="Superti-Furga G."/>
            <person name="Colinge J."/>
        </authorList>
    </citation>
    <scope>IDENTIFICATION BY MASS SPECTROMETRY [LARGE SCALE ANALYSIS]</scope>
</reference>
<reference key="29">
    <citation type="journal article" date="2011" name="FASEB J.">
        <title>Modulation of exosome-mediated mRNA turnover by interaction of GTP-binding protein 1 (GTPBP1) with its target mRNAs.</title>
        <authorList>
            <person name="Woo K.C."/>
            <person name="Kim T.D."/>
            <person name="Lee K.H."/>
            <person name="Kim D.Y."/>
            <person name="Kim S."/>
            <person name="Lee H.R."/>
            <person name="Kang H.J."/>
            <person name="Chung S.J."/>
            <person name="Senju S."/>
            <person name="Nishimura Y."/>
            <person name="Kim K.T."/>
        </authorList>
    </citation>
    <scope>INTERACTION WITH GTPBP1</scope>
</reference>
<reference key="30">
    <citation type="journal article" date="2011" name="Sci. Signal.">
        <title>System-wide temporal characterization of the proteome and phosphoproteome of human embryonic stem cell differentiation.</title>
        <authorList>
            <person name="Rigbolt K.T."/>
            <person name="Prokhorova T.A."/>
            <person name="Akimov V."/>
            <person name="Henningsen J."/>
            <person name="Johansen P.T."/>
            <person name="Kratchmarova I."/>
            <person name="Kassem M."/>
            <person name="Mann M."/>
            <person name="Olsen J.V."/>
            <person name="Blagoev B."/>
        </authorList>
    </citation>
    <scope>PHOSPHORYLATION [LARGE SCALE ANALYSIS] AT SER-80; SER-83 AND SER-190</scope>
    <scope>IDENTIFICATION BY MASS SPECTROMETRY [LARGE SCALE ANALYSIS]</scope>
</reference>
<reference key="31">
    <citation type="journal article" date="2013" name="J. Proteome Res.">
        <title>Toward a comprehensive characterization of a human cancer cell phosphoproteome.</title>
        <authorList>
            <person name="Zhou H."/>
            <person name="Di Palma S."/>
            <person name="Preisinger C."/>
            <person name="Peng M."/>
            <person name="Polat A.N."/>
            <person name="Heck A.J."/>
            <person name="Mohammed S."/>
        </authorList>
    </citation>
    <scope>PHOSPHORYLATION [LARGE SCALE ANALYSIS] AT SER-80; SER-83; THR-91; THR-127; SER-190; THR-193 AND SER-271</scope>
    <scope>IDENTIFICATION BY MASS SPECTROMETRY [LARGE SCALE ANALYSIS]</scope>
    <source>
        <tissue>Cervix carcinoma</tissue>
        <tissue>Erythroleukemia</tissue>
    </source>
</reference>
<reference key="32">
    <citation type="journal article" date="2014" name="J. Proteomics">
        <title>An enzyme assisted RP-RPLC approach for in-depth analysis of human liver phosphoproteome.</title>
        <authorList>
            <person name="Bian Y."/>
            <person name="Song C."/>
            <person name="Cheng K."/>
            <person name="Dong M."/>
            <person name="Wang F."/>
            <person name="Huang J."/>
            <person name="Sun D."/>
            <person name="Wang L."/>
            <person name="Ye M."/>
            <person name="Zou H."/>
        </authorList>
    </citation>
    <scope>PHOSPHORYLATION [LARGE SCALE ANALYSIS] AT THR-127 AND SER-190</scope>
    <scope>IDENTIFICATION BY MASS SPECTROMETRY [LARGE SCALE ANALYSIS]</scope>
    <source>
        <tissue>Liver</tissue>
    </source>
</reference>
<reference key="33">
    <citation type="journal article" date="2014" name="Mol. Cell. Proteomics">
        <title>Immunoaffinity enrichment and mass spectrometry analysis of protein methylation.</title>
        <authorList>
            <person name="Guo A."/>
            <person name="Gu H."/>
            <person name="Zhou J."/>
            <person name="Mulhern D."/>
            <person name="Wang Y."/>
            <person name="Lee K.A."/>
            <person name="Yang V."/>
            <person name="Aguiar M."/>
            <person name="Kornhauser J."/>
            <person name="Jia X."/>
            <person name="Ren J."/>
            <person name="Beausoleil S.A."/>
            <person name="Silva J.C."/>
            <person name="Vemulapalli V."/>
            <person name="Bedford M.T."/>
            <person name="Comb M.J."/>
        </authorList>
    </citation>
    <scope>METHYLATION [LARGE SCALE ANALYSIS] AT ARG-272; ARG-278; ARG-280 AND ARG-345</scope>
    <scope>METHYLATION [LARGE SCALE ANALYSIS] AT ARG-282 (ISOFORM 3)</scope>
    <scope>METHYLATION [LARGE SCALE ANALYSIS] AT ARG-263 (ISOFORM 4)</scope>
    <scope>IDENTIFICATION BY MASS SPECTROMETRY [LARGE SCALE ANALYSIS]</scope>
    <source>
        <tissue>Colon carcinoma</tissue>
    </source>
</reference>
<reference key="34">
    <citation type="journal article" date="2014" name="Nucleic Acids Res.">
        <title>AUF1 contributes to Cryptochrome1 mRNA degradation and rhythmic translation.</title>
        <authorList>
            <person name="Lee K.H."/>
            <person name="Kim S.H."/>
            <person name="Kim H.J."/>
            <person name="Kim W."/>
            <person name="Lee H.R."/>
            <person name="Jung Y."/>
            <person name="Choi J.H."/>
            <person name="Hong K.Y."/>
            <person name="Jang S.K."/>
            <person name="Kim K.T."/>
        </authorList>
    </citation>
    <scope>FUNCTION IN CIRCADIAN CLOCK</scope>
    <scope>INTERACTION WITH EIF3B; EIF4G1 AND RPS3</scope>
    <scope>SUBCELLULAR LOCATION</scope>
    <scope>RNA-BINDING</scope>
</reference>
<reference key="35">
    <citation type="journal article" date="2014" name="Proc. Natl. Acad. Sci. U.S.A.">
        <title>Mapping of SUMO sites and analysis of SUMOylation changes induced by external stimuli.</title>
        <authorList>
            <person name="Impens F."/>
            <person name="Radoshevich L."/>
            <person name="Cossart P."/>
            <person name="Ribet D."/>
        </authorList>
    </citation>
    <scope>SUMOYLATION [LARGE SCALE ANALYSIS] AT LYS-197</scope>
    <scope>IDENTIFICATION BY MASS SPECTROMETRY [LARGE SCALE ANALYSIS]</scope>
</reference>
<reference key="36">
    <citation type="journal article" date="2015" name="Proteomics">
        <title>N-terminome analysis of the human mitochondrial proteome.</title>
        <authorList>
            <person name="Vaca Jacome A.S."/>
            <person name="Rabilloud T."/>
            <person name="Schaeffer-Reiss C."/>
            <person name="Rompais M."/>
            <person name="Ayoub D."/>
            <person name="Lane L."/>
            <person name="Bairoch A."/>
            <person name="Van Dorsselaer A."/>
            <person name="Carapito C."/>
        </authorList>
    </citation>
    <scope>IDENTIFICATION BY MASS SPECTROMETRY [LARGE SCALE ANALYSIS]</scope>
</reference>
<reference key="37">
    <citation type="journal article" date="2017" name="Nat. Struct. Mol. Biol.">
        <title>Site-specific mapping of the human SUMO proteome reveals co-modification with phosphorylation.</title>
        <authorList>
            <person name="Hendriks I.A."/>
            <person name="Lyon D."/>
            <person name="Young C."/>
            <person name="Jensen L.J."/>
            <person name="Vertegaal A.C."/>
            <person name="Nielsen M.L."/>
        </authorList>
    </citation>
    <scope>SUMOYLATION [LARGE SCALE ANALYSIS] AT LYS-72; LYS-129 AND LYS-197</scope>
    <scope>IDENTIFICATION BY MASS SPECTROMETRY [LARGE SCALE ANALYSIS]</scope>
</reference>
<reference key="38">
    <citation type="journal article" date="1999" name="J. Mol. Biol.">
        <title>Structure and interactions with RNA of the N-terminal UUAG-specific RNA-binding domain of hnRNP D0.</title>
        <authorList>
            <person name="Nagata T."/>
            <person name="Kurihara Y."/>
            <person name="Matsuda G."/>
            <person name="Saeki J."/>
            <person name="Kohno T."/>
            <person name="Yanagida Y."/>
            <person name="Ishikawa F."/>
            <person name="Uesugi S."/>
            <person name="Katahira M."/>
        </authorList>
    </citation>
    <scope>STRUCTURE BY NMR OF 98-172</scope>
    <scope>FUNCTION</scope>
</reference>